<comment type="function">
    <text evidence="4">Transcription factor which plays a key role in limb development. Positively regulates FGF8 expression in the apical ectodermal ridge (AER) and contributes to limb outgrowth in embryos.</text>
</comment>
<comment type="subcellular location">
    <subcellularLocation>
        <location evidence="6">Nucleus</location>
    </subcellularLocation>
</comment>
<comment type="alternative products">
    <event type="alternative splicing"/>
    <isoform>
        <id>Q6NW96-1</id>
        <name>1</name>
        <sequence type="displayed"/>
    </isoform>
    <isoform>
        <id>Q6NW96-2</id>
        <name>2</name>
        <sequence type="described" ref="VSP_039468"/>
    </isoform>
</comment>
<comment type="developmental stage">
    <text evidence="4">Expressed in the forebrain, and in the prospective midbrain/hindbrain boundary during early somitogenesis. As development proceeds, also detected in the hindbrain, as well as in the apical fold of the developing pectoral fin, and this expression extends proximally.</text>
</comment>
<comment type="domain">
    <text evidence="1">The 9aaTAD motif is a transactivation domain present in a large number of yeast and animal transcription factors. In SP9, the motif is inactive.</text>
</comment>
<comment type="similarity">
    <text evidence="6">Belongs to the Sp1 C2H2-type zinc-finger protein family.</text>
</comment>
<reference key="1">
    <citation type="journal article" date="2004" name="Development">
        <title>Sp8 and Sp9, two closely related buttonhead-like transcription factors, regulate Fgf8 expression and limb outgrowth in vertebrate embryos.</title>
        <authorList>
            <person name="Kawakami Y."/>
            <person name="Rodriguez Esteban C."/>
            <person name="Matsui T."/>
            <person name="Rodriguez-Leon J."/>
            <person name="Kato S."/>
            <person name="Izpisua Belmonte J.C."/>
        </authorList>
    </citation>
    <scope>NUCLEOTIDE SEQUENCE [MRNA] (ISOFORM 2)</scope>
    <scope>FUNCTION</scope>
    <scope>DEVELOPMENTAL STAGE</scope>
</reference>
<reference key="2">
    <citation type="submission" date="2004-08" db="EMBL/GenBank/DDBJ databases">
        <title>Sp9, a new member of the Sp family of zinc-finger transcription factors, is dynamically expressed in brain, tail and pectoral fins during zebrafish development.</title>
        <authorList>
            <person name="van den Akker W.M.R."/>
            <person name="Mansouri A."/>
            <person name="Durston A.J."/>
        </authorList>
    </citation>
    <scope>NUCLEOTIDE SEQUENCE [MRNA] (ISOFORM 1)</scope>
</reference>
<reference key="3">
    <citation type="submission" date="2004-03" db="EMBL/GenBank/DDBJ databases">
        <authorList>
            <consortium name="NIH - Zebrafish Gene Collection (ZGC) project"/>
        </authorList>
    </citation>
    <scope>NUCLEOTIDE SEQUENCE [LARGE SCALE MRNA] (ISOFORM 1)</scope>
    <source>
        <tissue>Embryo</tissue>
    </source>
</reference>
<gene>
    <name type="primary">sp9</name>
</gene>
<keyword id="KW-0025">Alternative splicing</keyword>
<keyword id="KW-0238">DNA-binding</keyword>
<keyword id="KW-0479">Metal-binding</keyword>
<keyword id="KW-0539">Nucleus</keyword>
<keyword id="KW-1185">Reference proteome</keyword>
<keyword id="KW-0677">Repeat</keyword>
<keyword id="KW-0804">Transcription</keyword>
<keyword id="KW-0805">Transcription regulation</keyword>
<keyword id="KW-0862">Zinc</keyword>
<keyword id="KW-0863">Zinc-finger</keyword>
<accession>Q6NW96</accession>
<accession>Q64HY6</accession>
<name>SP9_DANRE</name>
<organism>
    <name type="scientific">Danio rerio</name>
    <name type="common">Zebrafish</name>
    <name type="synonym">Brachydanio rerio</name>
    <dbReference type="NCBI Taxonomy" id="7955"/>
    <lineage>
        <taxon>Eukaryota</taxon>
        <taxon>Metazoa</taxon>
        <taxon>Chordata</taxon>
        <taxon>Craniata</taxon>
        <taxon>Vertebrata</taxon>
        <taxon>Euteleostomi</taxon>
        <taxon>Actinopterygii</taxon>
        <taxon>Neopterygii</taxon>
        <taxon>Teleostei</taxon>
        <taxon>Ostariophysi</taxon>
        <taxon>Cypriniformes</taxon>
        <taxon>Danionidae</taxon>
        <taxon>Danioninae</taxon>
        <taxon>Danio</taxon>
    </lineage>
</organism>
<protein>
    <recommendedName>
        <fullName>Transcription factor Sp9</fullName>
    </recommendedName>
</protein>
<feature type="chain" id="PRO_0000395452" description="Transcription factor Sp9">
    <location>
        <begin position="1"/>
        <end position="439"/>
    </location>
</feature>
<feature type="zinc finger region" description="C2H2-type 1" evidence="2">
    <location>
        <begin position="308"/>
        <end position="332"/>
    </location>
</feature>
<feature type="zinc finger region" description="C2H2-type 2" evidence="2">
    <location>
        <begin position="338"/>
        <end position="362"/>
    </location>
</feature>
<feature type="zinc finger region" description="C2H2-type 3" evidence="2">
    <location>
        <begin position="368"/>
        <end position="390"/>
    </location>
</feature>
<feature type="region of interest" description="Disordered" evidence="3">
    <location>
        <begin position="384"/>
        <end position="439"/>
    </location>
</feature>
<feature type="short sequence motif" description="9aaTAD; inactive" evidence="1">
    <location>
        <begin position="166"/>
        <end position="174"/>
    </location>
</feature>
<feature type="compositionally biased region" description="Basic and acidic residues" evidence="3">
    <location>
        <begin position="429"/>
        <end position="439"/>
    </location>
</feature>
<feature type="splice variant" id="VSP_039468" description="In isoform 2." evidence="5">
    <original>MATSILG</original>
    <variation>MFYSLVKSTNFSSTQ</variation>
    <location>
        <begin position="1"/>
        <end position="7"/>
    </location>
</feature>
<dbReference type="EMBL" id="AY591905">
    <property type="protein sequence ID" value="AAU04514.1"/>
    <property type="molecule type" value="mRNA"/>
</dbReference>
<dbReference type="EMBL" id="AY731230">
    <property type="protein sequence ID" value="AAV34441.1"/>
    <property type="molecule type" value="mRNA"/>
</dbReference>
<dbReference type="EMBL" id="BC067673">
    <property type="protein sequence ID" value="AAH67673.1"/>
    <property type="molecule type" value="mRNA"/>
</dbReference>
<dbReference type="RefSeq" id="NP_998125.2">
    <molecule id="Q6NW96-2"/>
    <property type="nucleotide sequence ID" value="NM_212960.2"/>
</dbReference>
<dbReference type="RefSeq" id="XP_005167471.1">
    <molecule id="Q6NW96-1"/>
    <property type="nucleotide sequence ID" value="XM_005167414.5"/>
</dbReference>
<dbReference type="SMR" id="Q6NW96"/>
<dbReference type="FunCoup" id="Q6NW96">
    <property type="interactions" value="218"/>
</dbReference>
<dbReference type="STRING" id="7955.ENSDARP00000141658"/>
<dbReference type="PaxDb" id="7955-ENSDARP00000110885"/>
<dbReference type="Ensembl" id="ENSDART00000164276">
    <molecule id="Q6NW96-1"/>
    <property type="protein sequence ID" value="ENSDARP00000141658"/>
    <property type="gene ID" value="ENSDARG00000099374"/>
</dbReference>
<dbReference type="GeneID" id="405896"/>
<dbReference type="KEGG" id="dre:405896"/>
<dbReference type="AGR" id="ZFIN:ZDB-GENE-040426-2313"/>
<dbReference type="CTD" id="100131390"/>
<dbReference type="ZFIN" id="ZDB-GENE-040426-2313">
    <property type="gene designation" value="sp9"/>
</dbReference>
<dbReference type="eggNOG" id="KOG1721">
    <property type="taxonomic scope" value="Eukaryota"/>
</dbReference>
<dbReference type="HOGENOM" id="CLU_019484_4_1_1"/>
<dbReference type="InParanoid" id="Q6NW96"/>
<dbReference type="OMA" id="SASSWWD"/>
<dbReference type="OrthoDB" id="6365676at2759"/>
<dbReference type="PhylomeDB" id="Q6NW96"/>
<dbReference type="TreeFam" id="TF350150"/>
<dbReference type="PRO" id="PR:Q6NW96"/>
<dbReference type="Proteomes" id="UP000000437">
    <property type="component" value="Chromosome 9"/>
</dbReference>
<dbReference type="Bgee" id="ENSDARG00000099374">
    <property type="expression patterns" value="Expressed in larva and 14 other cell types or tissues"/>
</dbReference>
<dbReference type="GO" id="GO:0005634">
    <property type="term" value="C:nucleus"/>
    <property type="evidence" value="ECO:0007669"/>
    <property type="project" value="UniProtKB-SubCell"/>
</dbReference>
<dbReference type="GO" id="GO:0000981">
    <property type="term" value="F:DNA-binding transcription factor activity, RNA polymerase II-specific"/>
    <property type="evidence" value="ECO:0000318"/>
    <property type="project" value="GO_Central"/>
</dbReference>
<dbReference type="GO" id="GO:0000978">
    <property type="term" value="F:RNA polymerase II cis-regulatory region sequence-specific DNA binding"/>
    <property type="evidence" value="ECO:0000318"/>
    <property type="project" value="GO_Central"/>
</dbReference>
<dbReference type="GO" id="GO:0008270">
    <property type="term" value="F:zinc ion binding"/>
    <property type="evidence" value="ECO:0007669"/>
    <property type="project" value="UniProtKB-KW"/>
</dbReference>
<dbReference type="GO" id="GO:0030326">
    <property type="term" value="P:embryonic limb morphogenesis"/>
    <property type="evidence" value="ECO:0000315"/>
    <property type="project" value="UniProtKB"/>
</dbReference>
<dbReference type="GO" id="GO:0035118">
    <property type="term" value="P:embryonic pectoral fin morphogenesis"/>
    <property type="evidence" value="ECO:0000315"/>
    <property type="project" value="ZFIN"/>
</dbReference>
<dbReference type="GO" id="GO:0045743">
    <property type="term" value="P:positive regulation of fibroblast growth factor receptor signaling pathway"/>
    <property type="evidence" value="ECO:0000315"/>
    <property type="project" value="ZFIN"/>
</dbReference>
<dbReference type="GO" id="GO:0006357">
    <property type="term" value="P:regulation of transcription by RNA polymerase II"/>
    <property type="evidence" value="ECO:0000318"/>
    <property type="project" value="GO_Central"/>
</dbReference>
<dbReference type="CDD" id="cd22549">
    <property type="entry name" value="SP9_N"/>
    <property type="match status" value="1"/>
</dbReference>
<dbReference type="FunFam" id="3.30.160.60:FF:000077">
    <property type="entry name" value="Sp8 transcription factor"/>
    <property type="match status" value="1"/>
</dbReference>
<dbReference type="FunFam" id="3.30.160.60:FF:000014">
    <property type="entry name" value="Transcription factor Sp3"/>
    <property type="match status" value="1"/>
</dbReference>
<dbReference type="FunFam" id="3.30.160.60:FF:000026">
    <property type="entry name" value="Transcription factor Sp3"/>
    <property type="match status" value="1"/>
</dbReference>
<dbReference type="Gene3D" id="3.30.160.60">
    <property type="entry name" value="Classic Zinc Finger"/>
    <property type="match status" value="3"/>
</dbReference>
<dbReference type="InterPro" id="IPR036236">
    <property type="entry name" value="Znf_C2H2_sf"/>
</dbReference>
<dbReference type="InterPro" id="IPR013087">
    <property type="entry name" value="Znf_C2H2_type"/>
</dbReference>
<dbReference type="PANTHER" id="PTHR23235">
    <property type="entry name" value="KRUEPPEL-LIKE TRANSCRIPTION FACTOR"/>
    <property type="match status" value="1"/>
</dbReference>
<dbReference type="PANTHER" id="PTHR23235:SF26">
    <property type="entry name" value="TRANSCRIPTION FACTOR SP9"/>
    <property type="match status" value="1"/>
</dbReference>
<dbReference type="Pfam" id="PF00096">
    <property type="entry name" value="zf-C2H2"/>
    <property type="match status" value="3"/>
</dbReference>
<dbReference type="SMART" id="SM00355">
    <property type="entry name" value="ZnF_C2H2"/>
    <property type="match status" value="3"/>
</dbReference>
<dbReference type="SUPFAM" id="SSF57667">
    <property type="entry name" value="beta-beta-alpha zinc fingers"/>
    <property type="match status" value="2"/>
</dbReference>
<dbReference type="PROSITE" id="PS00028">
    <property type="entry name" value="ZINC_FINGER_C2H2_1"/>
    <property type="match status" value="3"/>
</dbReference>
<dbReference type="PROSITE" id="PS50157">
    <property type="entry name" value="ZINC_FINGER_C2H2_2"/>
    <property type="match status" value="3"/>
</dbReference>
<sequence length="439" mass="46772">MATSILGEEPRFGTTPLAMLAATCNKIGNTSPLTTLPDSSAFSKGGFHPWKRSSSSCNLGSSLPGFTVATSRSTSGLTTTTGAGNSAFCLASTSPTSSAFSAEYSSLFSNTTSVSSQDSGQSAFISKVHSSADTLYPRVGMAHPYESWYKSGFHSTISGDVANGASTWWDVHTNPGSWLEVQNPAGTLQSSLHSGTPQAIHSQLSGYNPDFSSLTHSAFSSTGISPTASHLLSTSQHLLTQEGFKTVIPTYTDASATNAMISGASSGIGTSSRSSRRYSGRATCDCPNCQEAERLGPAGASLRRKGLHSCHIPGCGKVYGKTSHLKAHLRWHTGERPFVCNWLFCGKRFTRSDELQRHLRTHTGEKRFACPVCNKRFMRSDHLSKHIKTHTAGGGGKKGSDSDTDTSNLETPRSESPELILEGVNPRVTVKDQSPHHES</sequence>
<evidence type="ECO:0000250" key="1">
    <source>
        <dbReference type="UniProtKB" id="P0CG40"/>
    </source>
</evidence>
<evidence type="ECO:0000255" key="2">
    <source>
        <dbReference type="PROSITE-ProRule" id="PRU00042"/>
    </source>
</evidence>
<evidence type="ECO:0000256" key="3">
    <source>
        <dbReference type="SAM" id="MobiDB-lite"/>
    </source>
</evidence>
<evidence type="ECO:0000269" key="4">
    <source>
    </source>
</evidence>
<evidence type="ECO:0000303" key="5">
    <source>
    </source>
</evidence>
<evidence type="ECO:0000305" key="6"/>
<proteinExistence type="evidence at transcript level"/>